<organism>
    <name type="scientific">Mus musculus</name>
    <name type="common">Mouse</name>
    <dbReference type="NCBI Taxonomy" id="10090"/>
    <lineage>
        <taxon>Eukaryota</taxon>
        <taxon>Metazoa</taxon>
        <taxon>Chordata</taxon>
        <taxon>Craniata</taxon>
        <taxon>Vertebrata</taxon>
        <taxon>Euteleostomi</taxon>
        <taxon>Mammalia</taxon>
        <taxon>Eutheria</taxon>
        <taxon>Euarchontoglires</taxon>
        <taxon>Glires</taxon>
        <taxon>Rodentia</taxon>
        <taxon>Myomorpha</taxon>
        <taxon>Muroidea</taxon>
        <taxon>Muridae</taxon>
        <taxon>Murinae</taxon>
        <taxon>Mus</taxon>
        <taxon>Mus</taxon>
    </lineage>
</organism>
<comment type="function">
    <text evidence="8">Component of the FACT complex, a general chromatin factor that acts to reorganize nucleosomes. The FACT complex is involved in multiple processes that require DNA as a template such as mRNA elongation, DNA replication and DNA repair. During transcription elongation the FACT complex acts as a histone chaperone that both destabilizes and restores nucleosomal structure. It facilitates the passage of RNA polymerase II and transcription by promoting the dissociation of one histone H2A-H2B dimer from the nucleosome, then subsequently promotes the reestablishment of the nucleosome following the passage of RNA polymerase II. The FACT complex is probably also involved in phosphorylation of 'Ser-392' of p53/TP53 via its association with CK2 (casein kinase II). Binds specifically to double-stranded DNA. Also acts as a transcriptional coactivator for p63/TP63.</text>
</comment>
<comment type="subunit">
    <text evidence="2 4 8">Interacts with MYOG (via C-terminal region) (PubMed:23364797). Component of the FACT complex, a stable heterodimer of SSRP1 and SUPT16H. Also a component of a CK2-SPT16-SSRP1 complex which forms following UV irradiation, composed of SSRP1, SUPT16H, CSNK2A1, CSNK2A2 and CSNK2B. Binds to histone H3-H4 tetramers, but not to intact nucleosomes. Identified in a centromere complex containing histones H2A, H2B and H4, and at least CENPA, CENPB, CENPC, CENPT, CENPN, HJURP, SUPT16H, SSRP1 and RSF1. Interacts with isoform gamma of TP63. Interacts with FYTTD1/UIF (By similarity). Interacts with SRF (By similarity). Interacts with NEK9 (By similarity).</text>
</comment>
<comment type="subcellular location">
    <subcellularLocation>
        <location evidence="3">Nucleus</location>
    </subcellularLocation>
    <subcellularLocation>
        <location evidence="3">Chromosome</location>
    </subcellularLocation>
    <subcellularLocation>
        <location evidence="3">Nucleus</location>
        <location evidence="3">Nucleolus</location>
    </subcellularLocation>
    <text evidence="3">Colocalizes with RNA polymerase II on chromatin. Recruited to actively transcribed loci.</text>
</comment>
<comment type="alternative products">
    <event type="alternative splicing"/>
    <isoform>
        <id>Q08943-1</id>
        <name>1</name>
        <sequence type="displayed"/>
    </isoform>
    <isoform>
        <id>Q08943-2</id>
        <name>2</name>
        <sequence type="described" ref="VSP_019626"/>
    </isoform>
</comment>
<comment type="PTM">
    <text evidence="1">Phosphorylated by CK2 following UV but not gamma irradiation. Phosphorylation inhibits its DNA-binding activity (By similarity).</text>
</comment>
<comment type="PTM">
    <text evidence="1">Ubiquitinated. Polyubiquitinated following caspase cleavage resulting in degradation of the N-terminal ubiquitinated part of the cleaved protein (By similarity).</text>
</comment>
<comment type="PTM">
    <text evidence="1">Sumoylated.</text>
</comment>
<comment type="disruption phenotype">
    <text evidence="7">Embryos die soon after implantation while preimplantation blastocysts are defective for cell outgrowth.</text>
</comment>
<comment type="similarity">
    <text evidence="10">Belongs to the SSRP1 family.</text>
</comment>
<comment type="sequence caution" evidence="10">
    <conflict type="frameshift">
        <sequence resource="EMBL-CDS" id="AAH42502"/>
    </conflict>
</comment>
<evidence type="ECO:0000250" key="1"/>
<evidence type="ECO:0000250" key="2">
    <source>
        <dbReference type="UniProtKB" id="Q04931"/>
    </source>
</evidence>
<evidence type="ECO:0000250" key="3">
    <source>
        <dbReference type="UniProtKB" id="Q05344"/>
    </source>
</evidence>
<evidence type="ECO:0000250" key="4">
    <source>
        <dbReference type="UniProtKB" id="Q08945"/>
    </source>
</evidence>
<evidence type="ECO:0000255" key="5">
    <source>
        <dbReference type="PROSITE-ProRule" id="PRU00267"/>
    </source>
</evidence>
<evidence type="ECO:0000256" key="6">
    <source>
        <dbReference type="SAM" id="MobiDB-lite"/>
    </source>
</evidence>
<evidence type="ECO:0000269" key="7">
    <source>
    </source>
</evidence>
<evidence type="ECO:0000269" key="8">
    <source>
    </source>
</evidence>
<evidence type="ECO:0000303" key="9">
    <source>
    </source>
</evidence>
<evidence type="ECO:0000305" key="10"/>
<evidence type="ECO:0007744" key="11">
    <source>
    </source>
</evidence>
<evidence type="ECO:0007744" key="12">
    <source>
    </source>
</evidence>
<evidence type="ECO:0007744" key="13">
    <source>
    </source>
</evidence>
<evidence type="ECO:0007744" key="14">
    <source>
    </source>
</evidence>
<evidence type="ECO:0007744" key="15">
    <source>
    </source>
</evidence>
<reference key="1">
    <citation type="journal article" date="1991" name="Mol. Cell. Biol.">
        <title>HMG1-related DNA-binding protein isolated with V-(D)-J recombination signal probes.</title>
        <authorList>
            <person name="Shirakata M."/>
            <person name="Hueppi K."/>
            <person name="Usada S."/>
            <person name="Okazaki K."/>
            <person name="Yoshida K."/>
            <person name="Sakano H."/>
        </authorList>
    </citation>
    <scope>NUCLEOTIDE SEQUENCE [MRNA] (ISOFORM 1)</scope>
    <source>
        <tissue>B-cell</tissue>
    </source>
</reference>
<reference key="2">
    <citation type="journal article" date="2005" name="Science">
        <title>The transcriptional landscape of the mammalian genome.</title>
        <authorList>
            <person name="Carninci P."/>
            <person name="Kasukawa T."/>
            <person name="Katayama S."/>
            <person name="Gough J."/>
            <person name="Frith M.C."/>
            <person name="Maeda N."/>
            <person name="Oyama R."/>
            <person name="Ravasi T."/>
            <person name="Lenhard B."/>
            <person name="Wells C."/>
            <person name="Kodzius R."/>
            <person name="Shimokawa K."/>
            <person name="Bajic V.B."/>
            <person name="Brenner S.E."/>
            <person name="Batalov S."/>
            <person name="Forrest A.R."/>
            <person name="Zavolan M."/>
            <person name="Davis M.J."/>
            <person name="Wilming L.G."/>
            <person name="Aidinis V."/>
            <person name="Allen J.E."/>
            <person name="Ambesi-Impiombato A."/>
            <person name="Apweiler R."/>
            <person name="Aturaliya R.N."/>
            <person name="Bailey T.L."/>
            <person name="Bansal M."/>
            <person name="Baxter L."/>
            <person name="Beisel K.W."/>
            <person name="Bersano T."/>
            <person name="Bono H."/>
            <person name="Chalk A.M."/>
            <person name="Chiu K.P."/>
            <person name="Choudhary V."/>
            <person name="Christoffels A."/>
            <person name="Clutterbuck D.R."/>
            <person name="Crowe M.L."/>
            <person name="Dalla E."/>
            <person name="Dalrymple B.P."/>
            <person name="de Bono B."/>
            <person name="Della Gatta G."/>
            <person name="di Bernardo D."/>
            <person name="Down T."/>
            <person name="Engstrom P."/>
            <person name="Fagiolini M."/>
            <person name="Faulkner G."/>
            <person name="Fletcher C.F."/>
            <person name="Fukushima T."/>
            <person name="Furuno M."/>
            <person name="Futaki S."/>
            <person name="Gariboldi M."/>
            <person name="Georgii-Hemming P."/>
            <person name="Gingeras T.R."/>
            <person name="Gojobori T."/>
            <person name="Green R.E."/>
            <person name="Gustincich S."/>
            <person name="Harbers M."/>
            <person name="Hayashi Y."/>
            <person name="Hensch T.K."/>
            <person name="Hirokawa N."/>
            <person name="Hill D."/>
            <person name="Huminiecki L."/>
            <person name="Iacono M."/>
            <person name="Ikeo K."/>
            <person name="Iwama A."/>
            <person name="Ishikawa T."/>
            <person name="Jakt M."/>
            <person name="Kanapin A."/>
            <person name="Katoh M."/>
            <person name="Kawasawa Y."/>
            <person name="Kelso J."/>
            <person name="Kitamura H."/>
            <person name="Kitano H."/>
            <person name="Kollias G."/>
            <person name="Krishnan S.P."/>
            <person name="Kruger A."/>
            <person name="Kummerfeld S.K."/>
            <person name="Kurochkin I.V."/>
            <person name="Lareau L.F."/>
            <person name="Lazarevic D."/>
            <person name="Lipovich L."/>
            <person name="Liu J."/>
            <person name="Liuni S."/>
            <person name="McWilliam S."/>
            <person name="Madan Babu M."/>
            <person name="Madera M."/>
            <person name="Marchionni L."/>
            <person name="Matsuda H."/>
            <person name="Matsuzawa S."/>
            <person name="Miki H."/>
            <person name="Mignone F."/>
            <person name="Miyake S."/>
            <person name="Morris K."/>
            <person name="Mottagui-Tabar S."/>
            <person name="Mulder N."/>
            <person name="Nakano N."/>
            <person name="Nakauchi H."/>
            <person name="Ng P."/>
            <person name="Nilsson R."/>
            <person name="Nishiguchi S."/>
            <person name="Nishikawa S."/>
            <person name="Nori F."/>
            <person name="Ohara O."/>
            <person name="Okazaki Y."/>
            <person name="Orlando V."/>
            <person name="Pang K.C."/>
            <person name="Pavan W.J."/>
            <person name="Pavesi G."/>
            <person name="Pesole G."/>
            <person name="Petrovsky N."/>
            <person name="Piazza S."/>
            <person name="Reed J."/>
            <person name="Reid J.F."/>
            <person name="Ring B.Z."/>
            <person name="Ringwald M."/>
            <person name="Rost B."/>
            <person name="Ruan Y."/>
            <person name="Salzberg S.L."/>
            <person name="Sandelin A."/>
            <person name="Schneider C."/>
            <person name="Schoenbach C."/>
            <person name="Sekiguchi K."/>
            <person name="Semple C.A."/>
            <person name="Seno S."/>
            <person name="Sessa L."/>
            <person name="Sheng Y."/>
            <person name="Shibata Y."/>
            <person name="Shimada H."/>
            <person name="Shimada K."/>
            <person name="Silva D."/>
            <person name="Sinclair B."/>
            <person name="Sperling S."/>
            <person name="Stupka E."/>
            <person name="Sugiura K."/>
            <person name="Sultana R."/>
            <person name="Takenaka Y."/>
            <person name="Taki K."/>
            <person name="Tammoja K."/>
            <person name="Tan S.L."/>
            <person name="Tang S."/>
            <person name="Taylor M.S."/>
            <person name="Tegner J."/>
            <person name="Teichmann S.A."/>
            <person name="Ueda H.R."/>
            <person name="van Nimwegen E."/>
            <person name="Verardo R."/>
            <person name="Wei C.L."/>
            <person name="Yagi K."/>
            <person name="Yamanishi H."/>
            <person name="Zabarovsky E."/>
            <person name="Zhu S."/>
            <person name="Zimmer A."/>
            <person name="Hide W."/>
            <person name="Bult C."/>
            <person name="Grimmond S.M."/>
            <person name="Teasdale R.D."/>
            <person name="Liu E.T."/>
            <person name="Brusic V."/>
            <person name="Quackenbush J."/>
            <person name="Wahlestedt C."/>
            <person name="Mattick J.S."/>
            <person name="Hume D.A."/>
            <person name="Kai C."/>
            <person name="Sasaki D."/>
            <person name="Tomaru Y."/>
            <person name="Fukuda S."/>
            <person name="Kanamori-Katayama M."/>
            <person name="Suzuki M."/>
            <person name="Aoki J."/>
            <person name="Arakawa T."/>
            <person name="Iida J."/>
            <person name="Imamura K."/>
            <person name="Itoh M."/>
            <person name="Kato T."/>
            <person name="Kawaji H."/>
            <person name="Kawagashira N."/>
            <person name="Kawashima T."/>
            <person name="Kojima M."/>
            <person name="Kondo S."/>
            <person name="Konno H."/>
            <person name="Nakano K."/>
            <person name="Ninomiya N."/>
            <person name="Nishio T."/>
            <person name="Okada M."/>
            <person name="Plessy C."/>
            <person name="Shibata K."/>
            <person name="Shiraki T."/>
            <person name="Suzuki S."/>
            <person name="Tagami M."/>
            <person name="Waki K."/>
            <person name="Watahiki A."/>
            <person name="Okamura-Oho Y."/>
            <person name="Suzuki H."/>
            <person name="Kawai J."/>
            <person name="Hayashizaki Y."/>
        </authorList>
    </citation>
    <scope>NUCLEOTIDE SEQUENCE [LARGE SCALE MRNA] (ISOFORM 1)</scope>
    <source>
        <strain>C57BL/6J</strain>
        <tissue>Bone marrow</tissue>
        <tissue>Heart</tissue>
        <tissue>Liver</tissue>
        <tissue>Stomach</tissue>
        <tissue>Visual cortex</tissue>
    </source>
</reference>
<reference key="3">
    <citation type="journal article" date="2004" name="Genome Res.">
        <title>The status, quality, and expansion of the NIH full-length cDNA project: the Mammalian Gene Collection (MGC).</title>
        <authorList>
            <consortium name="The MGC Project Team"/>
        </authorList>
    </citation>
    <scope>NUCLEOTIDE SEQUENCE [LARGE SCALE MRNA] (ISOFORM 2)</scope>
    <scope>NUCLEOTIDE SEQUENCE [LARGE SCALE MRNA] OF 589-708 (ISOFORM 1)</scope>
    <source>
        <strain>C57BL/6J</strain>
        <strain>FVB/N-3</strain>
        <tissue>Mammary gland</tissue>
        <tissue>Mammary tumor</tissue>
    </source>
</reference>
<reference key="4">
    <citation type="journal article" date="2003" name="Mol. Cell. Biol.">
        <title>The high-mobility-group box protein SSRP1/T160 is essential for cell viability in day 3.5 mouse embryos.</title>
        <authorList>
            <person name="Cao S."/>
            <person name="Bendall H."/>
            <person name="Hicks G.G."/>
            <person name="Nashabi A."/>
            <person name="Sakano H."/>
            <person name="Shinkai Y."/>
            <person name="Gariglio M."/>
            <person name="Oltz E.M."/>
            <person name="Ruley H.E."/>
        </authorList>
    </citation>
    <scope>DISRUPTION PHENOTYPE</scope>
</reference>
<reference key="5">
    <citation type="journal article" date="2007" name="Proc. Natl. Acad. Sci. U.S.A.">
        <title>Large-scale phosphorylation analysis of mouse liver.</title>
        <authorList>
            <person name="Villen J."/>
            <person name="Beausoleil S.A."/>
            <person name="Gerber S.A."/>
            <person name="Gygi S.P."/>
        </authorList>
    </citation>
    <scope>PHOSPHORYLATION [LARGE SCALE ANALYSIS] AT SER-444</scope>
    <scope>IDENTIFICATION BY MASS SPECTROMETRY [LARGE SCALE ANALYSIS]</scope>
    <source>
        <tissue>Liver</tissue>
    </source>
</reference>
<reference key="6">
    <citation type="journal article" date="2009" name="Immunity">
        <title>The phagosomal proteome in interferon-gamma-activated macrophages.</title>
        <authorList>
            <person name="Trost M."/>
            <person name="English L."/>
            <person name="Lemieux S."/>
            <person name="Courcelles M."/>
            <person name="Desjardins M."/>
            <person name="Thibault P."/>
        </authorList>
    </citation>
    <scope>PHOSPHORYLATION [LARGE SCALE ANALYSIS] AT SER-444</scope>
    <scope>IDENTIFICATION BY MASS SPECTROMETRY [LARGE SCALE ANALYSIS]</scope>
</reference>
<reference key="7">
    <citation type="journal article" date="2009" name="Mol. Cell. Proteomics">
        <title>Large scale localization of protein phosphorylation by use of electron capture dissociation mass spectrometry.</title>
        <authorList>
            <person name="Sweet S.M."/>
            <person name="Bailey C.M."/>
            <person name="Cunningham D.L."/>
            <person name="Heath J.K."/>
            <person name="Cooper H.J."/>
        </authorList>
    </citation>
    <scope>PHOSPHORYLATION [LARGE SCALE ANALYSIS] AT SER-444</scope>
    <scope>IDENTIFICATION BY MASS SPECTROMETRY [LARGE SCALE ANALYSIS]</scope>
    <source>
        <tissue>Embryonic fibroblast</tissue>
    </source>
</reference>
<reference key="8">
    <citation type="journal article" date="2010" name="Cell">
        <title>A tissue-specific atlas of mouse protein phosphorylation and expression.</title>
        <authorList>
            <person name="Huttlin E.L."/>
            <person name="Jedrychowski M.P."/>
            <person name="Elias J.E."/>
            <person name="Goswami T."/>
            <person name="Rad R."/>
            <person name="Beausoleil S.A."/>
            <person name="Villen J."/>
            <person name="Haas W."/>
            <person name="Sowa M.E."/>
            <person name="Gygi S.P."/>
        </authorList>
    </citation>
    <scope>PHOSPHORYLATION [LARGE SCALE ANALYSIS] AT TYR-441; SER-444 AND TYR-452</scope>
    <scope>IDENTIFICATION BY MASS SPECTROMETRY [LARGE SCALE ANALYSIS]</scope>
    <source>
        <tissue>Brain</tissue>
        <tissue>Brown adipose tissue</tissue>
        <tissue>Heart</tissue>
        <tissue>Kidney</tissue>
        <tissue>Liver</tissue>
        <tissue>Lung</tissue>
        <tissue>Pancreas</tissue>
        <tissue>Spleen</tissue>
        <tissue>Testis</tissue>
    </source>
</reference>
<reference key="9">
    <citation type="journal article" date="2013" name="J. Biol. Chem.">
        <title>Myogenin recruits the histone chaperone facilitates chromatin transcription (FACT) to promote nucleosome disassembly at muscle-specific genes.</title>
        <authorList>
            <person name="Lolis A.A."/>
            <person name="Londhe P."/>
            <person name="Beggs B.C."/>
            <person name="Byrum S.D."/>
            <person name="Tackett A.J."/>
            <person name="Davie J.K."/>
        </authorList>
    </citation>
    <scope>FUNCTION</scope>
    <scope>INTERACTION WITH MYOG</scope>
</reference>
<reference key="10">
    <citation type="journal article" date="2013" name="Mol. Cell">
        <title>SIRT5-mediated lysine desuccinylation impacts diverse metabolic pathways.</title>
        <authorList>
            <person name="Park J."/>
            <person name="Chen Y."/>
            <person name="Tishkoff D.X."/>
            <person name="Peng C."/>
            <person name="Tan M."/>
            <person name="Dai L."/>
            <person name="Xie Z."/>
            <person name="Zhang Y."/>
            <person name="Zwaans B.M."/>
            <person name="Skinner M.E."/>
            <person name="Lombard D.B."/>
            <person name="Zhao Y."/>
        </authorList>
    </citation>
    <scope>ACETYLATION [LARGE SCALE ANALYSIS] AT LYS-542</scope>
    <scope>IDENTIFICATION BY MASS SPECTROMETRY [LARGE SCALE ANALYSIS]</scope>
    <source>
        <tissue>Embryonic fibroblast</tissue>
    </source>
</reference>
<sequence length="708" mass="80860">MAETLEFNDIFQEVKGSMNDGRLRLSRQGIIFKNSKTGKVDNIQAGELTEGIWRRVALGHGLKLLTKNGHVYKYDGFRESEFEKLSDFFKTHYRLELMEKDLCVKGWNWGTVKFGGQLLSFDIGDQPVFEIPLSNVSQCTTGKNEVTLEFHQNDDAEVSLMEVRFYVPPTQEDGVDPVEAFAQNVLSKADVIQATGDAICIFRELQCLTPRGRYDIRIYPTFLHLHGKTFDYKIPYTTVLRLFLLPHKDQRQMFFVISLDPPIKQGQTRYHFLILLFSKDEDISLTLNMNEEEVEKRFEGRLTKNMSGSLYEMVSRVMKALVNRKITVPGNFQGHSGAQCITCSYKASSGLLYPLERGFIYVHKPPVHIRFDEISFVNFARGTTTTRSFDFEIETKQGTQYTFSSIEREEYGKLFDFVNAKKLNIKNRGLKEGINPGYDDYADSDEDQHDAYLERMKEEGKIREENANDSSDDSGEETDESFNPGEEEEDVAEEFDSNASASSSSNEGDSDREEKKREQLKRAKMAKDRKSRRKSSEAKKGKDPNAPKRPMSAYMLWLNASREKIKSDHPGISITDLSKKAGEIWKGMSKEKKEEWDRKAEDARREYEKAMKEYEGGRGDSSKRDKSKKKKKVKAKMEKKSTPSRGSSSKSSSRQLSDSFKSKEFVSSDESSSGENKSKKKRRRSEDSEEELASTPPSSEDSASGSDE</sequence>
<feature type="initiator methionine" description="Removed" evidence="4">
    <location>
        <position position="1"/>
    </location>
</feature>
<feature type="chain" id="PRO_0000048607" description="FACT complex subunit SSRP1">
    <location>
        <begin position="2"/>
        <end position="708"/>
    </location>
</feature>
<feature type="DNA-binding region" description="HMG box" evidence="5">
    <location>
        <begin position="547"/>
        <end position="615"/>
    </location>
</feature>
<feature type="region of interest" description="Disordered" evidence="6">
    <location>
        <begin position="458"/>
        <end position="708"/>
    </location>
</feature>
<feature type="compositionally biased region" description="Acidic residues" evidence="6">
    <location>
        <begin position="470"/>
        <end position="496"/>
    </location>
</feature>
<feature type="compositionally biased region" description="Low complexity" evidence="6">
    <location>
        <begin position="497"/>
        <end position="507"/>
    </location>
</feature>
<feature type="compositionally biased region" description="Basic and acidic residues" evidence="6">
    <location>
        <begin position="512"/>
        <end position="546"/>
    </location>
</feature>
<feature type="compositionally biased region" description="Basic and acidic residues" evidence="6">
    <location>
        <begin position="577"/>
        <end position="624"/>
    </location>
</feature>
<feature type="compositionally biased region" description="Basic residues" evidence="6">
    <location>
        <begin position="625"/>
        <end position="634"/>
    </location>
</feature>
<feature type="compositionally biased region" description="Low complexity" evidence="6">
    <location>
        <begin position="643"/>
        <end position="659"/>
    </location>
</feature>
<feature type="compositionally biased region" description="Polar residues" evidence="6">
    <location>
        <begin position="695"/>
        <end position="708"/>
    </location>
</feature>
<feature type="site" description="Cleavage; by caspase-3 and/or caspase-7" evidence="1">
    <location>
        <begin position="450"/>
        <end position="451"/>
    </location>
</feature>
<feature type="modified residue" description="N-acetylalanine" evidence="4">
    <location>
        <position position="2"/>
    </location>
</feature>
<feature type="modified residue" description="Phosphothreonine" evidence="4">
    <location>
        <position position="170"/>
    </location>
</feature>
<feature type="modified residue" description="N6-acetyllysine" evidence="4">
    <location>
        <position position="233"/>
    </location>
</feature>
<feature type="modified residue" description="N6-acetyllysine" evidence="4">
    <location>
        <position position="413"/>
    </location>
</feature>
<feature type="modified residue" description="Phosphotyrosine" evidence="14">
    <location>
        <position position="441"/>
    </location>
</feature>
<feature type="modified residue" description="Phosphoserine" evidence="11 12 13 14">
    <location>
        <position position="444"/>
    </location>
</feature>
<feature type="modified residue" description="Phosphotyrosine" evidence="14">
    <location>
        <position position="452"/>
    </location>
</feature>
<feature type="modified residue" description="Phosphoserine" evidence="4">
    <location>
        <position position="471"/>
    </location>
</feature>
<feature type="modified residue" description="Phosphoserine; by CK2" evidence="4">
    <location>
        <position position="510"/>
    </location>
</feature>
<feature type="modified residue" description="N6-acetyllysine" evidence="15">
    <location>
        <position position="542"/>
    </location>
</feature>
<feature type="modified residue" description="Phosphoserine; by CK2" evidence="4">
    <location>
        <position position="657"/>
    </location>
</feature>
<feature type="modified residue" description="Phosphoserine" evidence="4">
    <location>
        <position position="659"/>
    </location>
</feature>
<feature type="modified residue" description="Phosphoserine" evidence="4">
    <location>
        <position position="667"/>
    </location>
</feature>
<feature type="modified residue" description="Phosphoserine" evidence="4">
    <location>
        <position position="668"/>
    </location>
</feature>
<feature type="modified residue" description="Phosphoserine" evidence="4">
    <location>
        <position position="671"/>
    </location>
</feature>
<feature type="modified residue" description="Phosphoserine" evidence="4">
    <location>
        <position position="672"/>
    </location>
</feature>
<feature type="modified residue" description="Phosphoserine" evidence="4">
    <location>
        <position position="673"/>
    </location>
</feature>
<feature type="modified residue" description="Phosphoserine; by CK2" evidence="4">
    <location>
        <position position="688"/>
    </location>
</feature>
<feature type="cross-link" description="Glycyl lysine isopeptide (Lys-Gly) (interchain with G-Cter in SUMO2)" evidence="4">
    <location>
        <position position="90"/>
    </location>
</feature>
<feature type="cross-link" description="Glycyl lysine isopeptide (Lys-Gly) (interchain with G-Cter in SUMO2)" evidence="4">
    <location>
        <position position="296"/>
    </location>
</feature>
<feature type="cross-link" description="Glycyl lysine isopeptide (Lys-Gly) (interchain with G-Cter in SUMO2)" evidence="4">
    <location>
        <position position="364"/>
    </location>
</feature>
<feature type="splice variant" id="VSP_019626" description="In isoform 2." evidence="9">
    <original>S</original>
    <variation>SSKRDK</variation>
    <location>
        <position position="621"/>
    </location>
</feature>
<feature type="sequence conflict" description="In Ref. 1; AAB19500." evidence="10" ref="1">
    <original>RQ</original>
    <variation>PS</variation>
    <location>
        <begin position="27"/>
        <end position="28"/>
    </location>
</feature>
<feature type="sequence conflict" description="In Ref. 1; AAB19500." evidence="10" ref="1">
    <original>R</original>
    <variation>P</variation>
    <location>
        <position position="54"/>
    </location>
</feature>
<feature type="sequence conflict" description="In Ref. 1; AAB19500." evidence="10" ref="1">
    <original>QCTTGKN</original>
    <variation>SVPQARI</variation>
    <location>
        <begin position="138"/>
        <end position="144"/>
    </location>
</feature>
<feature type="sequence conflict" description="In Ref. 1; AAB19500." evidence="10" ref="1">
    <original>A</original>
    <variation>P</variation>
    <location>
        <position position="156"/>
    </location>
</feature>
<feature type="sequence conflict" description="In Ref. 3; AAH96682." evidence="10" ref="3">
    <original>SK</original>
    <variation>HE</variation>
    <location>
        <begin position="589"/>
        <end position="590"/>
    </location>
</feature>
<feature type="sequence conflict" description="In Ref. 3; AAH96682." evidence="10" ref="3">
    <original>R</original>
    <variation>S</variation>
    <location>
        <position position="604"/>
    </location>
</feature>
<dbReference type="EMBL" id="S50213">
    <property type="protein sequence ID" value="AAB19500.2"/>
    <property type="molecule type" value="mRNA"/>
</dbReference>
<dbReference type="EMBL" id="AK146446">
    <property type="protein sequence ID" value="BAE27178.1"/>
    <property type="molecule type" value="mRNA"/>
</dbReference>
<dbReference type="EMBL" id="AK146585">
    <property type="protein sequence ID" value="BAE27280.1"/>
    <property type="molecule type" value="mRNA"/>
</dbReference>
<dbReference type="EMBL" id="AK146607">
    <property type="protein sequence ID" value="BAE27299.1"/>
    <property type="molecule type" value="mRNA"/>
</dbReference>
<dbReference type="EMBL" id="AK151584">
    <property type="protein sequence ID" value="BAE30524.1"/>
    <property type="molecule type" value="mRNA"/>
</dbReference>
<dbReference type="EMBL" id="AK158552">
    <property type="protein sequence ID" value="BAE34555.1"/>
    <property type="molecule type" value="mRNA"/>
</dbReference>
<dbReference type="EMBL" id="BC042502">
    <property type="protein sequence ID" value="AAH42502.1"/>
    <property type="status" value="ALT_FRAME"/>
    <property type="molecule type" value="mRNA"/>
</dbReference>
<dbReference type="EMBL" id="BC096682">
    <property type="protein sequence ID" value="AAH96682.1"/>
    <property type="molecule type" value="mRNA"/>
</dbReference>
<dbReference type="CCDS" id="CCDS38165.1">
    <molecule id="Q08943-1"/>
</dbReference>
<dbReference type="PIR" id="A41265">
    <property type="entry name" value="A41265"/>
</dbReference>
<dbReference type="RefSeq" id="NP_001129553.1">
    <molecule id="Q08943-1"/>
    <property type="nucleotide sequence ID" value="NM_001136081.3"/>
</dbReference>
<dbReference type="RefSeq" id="NP_001408000.1">
    <molecule id="Q08943-1"/>
    <property type="nucleotide sequence ID" value="NM_001421071.1"/>
</dbReference>
<dbReference type="RefSeq" id="NP_001408001.1">
    <molecule id="Q08943-1"/>
    <property type="nucleotide sequence ID" value="NM_001421072.1"/>
</dbReference>
<dbReference type="RefSeq" id="NP_001408002.1">
    <molecule id="Q08943-1"/>
    <property type="nucleotide sequence ID" value="NM_001421073.1"/>
</dbReference>
<dbReference type="RefSeq" id="NP_892035.2">
    <molecule id="Q08943-1"/>
    <property type="nucleotide sequence ID" value="NM_182990.5"/>
</dbReference>
<dbReference type="RefSeq" id="XP_006499133.1">
    <property type="nucleotide sequence ID" value="XM_006499070.1"/>
</dbReference>
<dbReference type="SMR" id="Q08943"/>
<dbReference type="BioGRID" id="203512">
    <property type="interactions" value="5"/>
</dbReference>
<dbReference type="ComplexPortal" id="CPX-433">
    <property type="entry name" value="FACT complex"/>
</dbReference>
<dbReference type="FunCoup" id="Q08943">
    <property type="interactions" value="4182"/>
</dbReference>
<dbReference type="IntAct" id="Q08943">
    <property type="interactions" value="7"/>
</dbReference>
<dbReference type="MINT" id="Q08943"/>
<dbReference type="STRING" id="10090.ENSMUSP00000076971"/>
<dbReference type="iPTMnet" id="Q08943"/>
<dbReference type="PhosphoSitePlus" id="Q08943"/>
<dbReference type="SwissPalm" id="Q08943"/>
<dbReference type="jPOST" id="Q08943"/>
<dbReference type="PaxDb" id="10090-ENSMUSP00000076971"/>
<dbReference type="PeptideAtlas" id="Q08943"/>
<dbReference type="ProteomicsDB" id="257478">
    <molecule id="Q08943-1"/>
</dbReference>
<dbReference type="ProteomicsDB" id="257479">
    <molecule id="Q08943-2"/>
</dbReference>
<dbReference type="Pumba" id="Q08943"/>
<dbReference type="Antibodypedia" id="1060">
    <property type="antibodies" value="359 antibodies from 34 providers"/>
</dbReference>
<dbReference type="DNASU" id="20833"/>
<dbReference type="Ensembl" id="ENSMUST00000077798.13">
    <molecule id="Q08943-1"/>
    <property type="protein sequence ID" value="ENSMUSP00000076971.7"/>
    <property type="gene ID" value="ENSMUSG00000027067.17"/>
</dbReference>
<dbReference type="Ensembl" id="ENSMUST00000168266.8">
    <molecule id="Q08943-1"/>
    <property type="protein sequence ID" value="ENSMUSP00000127058.2"/>
    <property type="gene ID" value="ENSMUSG00000027067.17"/>
</dbReference>
<dbReference type="GeneID" id="20833"/>
<dbReference type="KEGG" id="mmu:20833"/>
<dbReference type="UCSC" id="uc008kju.2">
    <molecule id="Q08943-1"/>
    <property type="organism name" value="mouse"/>
</dbReference>
<dbReference type="AGR" id="MGI:107912"/>
<dbReference type="CTD" id="6749"/>
<dbReference type="MGI" id="MGI:107912">
    <property type="gene designation" value="Ssrp1"/>
</dbReference>
<dbReference type="VEuPathDB" id="HostDB:ENSMUSG00000027067"/>
<dbReference type="eggNOG" id="KOG0526">
    <property type="taxonomic scope" value="Eukaryota"/>
</dbReference>
<dbReference type="GeneTree" id="ENSGT00940000157117"/>
<dbReference type="InParanoid" id="Q08943"/>
<dbReference type="OMA" id="QVVTKIF"/>
<dbReference type="OrthoDB" id="498543at2759"/>
<dbReference type="PhylomeDB" id="Q08943"/>
<dbReference type="TreeFam" id="TF315228"/>
<dbReference type="Reactome" id="R-MMU-112382">
    <property type="pathway name" value="Formation of RNA Pol II elongation complex"/>
</dbReference>
<dbReference type="Reactome" id="R-MMU-674695">
    <property type="pathway name" value="RNA Polymerase II Pre-transcription Events"/>
</dbReference>
<dbReference type="Reactome" id="R-MMU-6796648">
    <property type="pathway name" value="TP53 Regulates Transcription of DNA Repair Genes"/>
</dbReference>
<dbReference type="Reactome" id="R-MMU-6804756">
    <property type="pathway name" value="Regulation of TP53 Activity through Phosphorylation"/>
</dbReference>
<dbReference type="Reactome" id="R-MMU-75955">
    <property type="pathway name" value="RNA Polymerase II Transcription Elongation"/>
</dbReference>
<dbReference type="BioGRID-ORCS" id="20833">
    <property type="hits" value="25 hits in 117 CRISPR screens"/>
</dbReference>
<dbReference type="ChiTaRS" id="Ssrp1">
    <property type="organism name" value="mouse"/>
</dbReference>
<dbReference type="PRO" id="PR:Q08943"/>
<dbReference type="Proteomes" id="UP000000589">
    <property type="component" value="Chromosome 2"/>
</dbReference>
<dbReference type="RNAct" id="Q08943">
    <property type="molecule type" value="protein"/>
</dbReference>
<dbReference type="Bgee" id="ENSMUSG00000027067">
    <property type="expression patterns" value="Expressed in otic placode and 269 other cell types or tissues"/>
</dbReference>
<dbReference type="ExpressionAtlas" id="Q08943">
    <property type="expression patterns" value="baseline and differential"/>
</dbReference>
<dbReference type="GO" id="GO:0035101">
    <property type="term" value="C:FACT complex"/>
    <property type="evidence" value="ECO:0000266"/>
    <property type="project" value="ComplexPortal"/>
</dbReference>
<dbReference type="GO" id="GO:0005730">
    <property type="term" value="C:nucleolus"/>
    <property type="evidence" value="ECO:0007669"/>
    <property type="project" value="UniProtKB-SubCell"/>
</dbReference>
<dbReference type="GO" id="GO:0005634">
    <property type="term" value="C:nucleus"/>
    <property type="evidence" value="ECO:0000266"/>
    <property type="project" value="ComplexPortal"/>
</dbReference>
<dbReference type="GO" id="GO:0003682">
    <property type="term" value="F:chromatin binding"/>
    <property type="evidence" value="ECO:0000314"/>
    <property type="project" value="MGI"/>
</dbReference>
<dbReference type="GO" id="GO:0003677">
    <property type="term" value="F:DNA binding"/>
    <property type="evidence" value="ECO:0007669"/>
    <property type="project" value="UniProtKB-KW"/>
</dbReference>
<dbReference type="GO" id="GO:0006281">
    <property type="term" value="P:DNA repair"/>
    <property type="evidence" value="ECO:0007669"/>
    <property type="project" value="UniProtKB-KW"/>
</dbReference>
<dbReference type="GO" id="GO:0006260">
    <property type="term" value="P:DNA replication"/>
    <property type="evidence" value="ECO:0007669"/>
    <property type="project" value="UniProtKB-KW"/>
</dbReference>
<dbReference type="GO" id="GO:0006334">
    <property type="term" value="P:nucleosome assembly"/>
    <property type="evidence" value="ECO:0000303"/>
    <property type="project" value="ComplexPortal"/>
</dbReference>
<dbReference type="GO" id="GO:0006337">
    <property type="term" value="P:nucleosome disassembly"/>
    <property type="evidence" value="ECO:0000266"/>
    <property type="project" value="ComplexPortal"/>
</dbReference>
<dbReference type="GO" id="GO:1902275">
    <property type="term" value="P:regulation of chromatin organization"/>
    <property type="evidence" value="ECO:0007669"/>
    <property type="project" value="Ensembl"/>
</dbReference>
<dbReference type="CDD" id="cd21994">
    <property type="entry name" value="HMG-box_SSRP1-like"/>
    <property type="match status" value="1"/>
</dbReference>
<dbReference type="CDD" id="cd13230">
    <property type="entry name" value="PH1_SSRP1-like"/>
    <property type="match status" value="1"/>
</dbReference>
<dbReference type="CDD" id="cd13231">
    <property type="entry name" value="PH2_SSRP1-like"/>
    <property type="match status" value="1"/>
</dbReference>
<dbReference type="FunFam" id="1.10.30.10:FF:000032">
    <property type="entry name" value="FACT complex subunit SSRP1"/>
    <property type="match status" value="1"/>
</dbReference>
<dbReference type="FunFam" id="2.30.29.220:FF:000001">
    <property type="entry name" value="FACT complex subunit SSRP1"/>
    <property type="match status" value="1"/>
</dbReference>
<dbReference type="FunFam" id="2.30.29.30:FF:000119">
    <property type="entry name" value="FACT complex subunit SSRP1"/>
    <property type="match status" value="1"/>
</dbReference>
<dbReference type="FunFam" id="2.30.29.150:FF:000001">
    <property type="entry name" value="Fact complex subunit ssrp1"/>
    <property type="match status" value="1"/>
</dbReference>
<dbReference type="FunFam" id="2.30.29.30:FF:000098">
    <property type="entry name" value="Fact complex subunit ssrp1"/>
    <property type="match status" value="1"/>
</dbReference>
<dbReference type="Gene3D" id="2.30.29.150">
    <property type="match status" value="1"/>
</dbReference>
<dbReference type="Gene3D" id="1.10.30.10">
    <property type="entry name" value="High mobility group box domain"/>
    <property type="match status" value="1"/>
</dbReference>
<dbReference type="Gene3D" id="2.30.29.30">
    <property type="entry name" value="Pleckstrin-homology domain (PH domain)/Phosphotyrosine-binding domain (PTB)"/>
    <property type="match status" value="2"/>
</dbReference>
<dbReference type="Gene3D" id="2.30.29.220">
    <property type="entry name" value="Structure-specific recognition protein (SSRP1)"/>
    <property type="match status" value="1"/>
</dbReference>
<dbReference type="InterPro" id="IPR009071">
    <property type="entry name" value="HMG_box_dom"/>
</dbReference>
<dbReference type="InterPro" id="IPR036910">
    <property type="entry name" value="HMG_box_dom_sf"/>
</dbReference>
<dbReference type="InterPro" id="IPR011993">
    <property type="entry name" value="PH-like_dom_sf"/>
</dbReference>
<dbReference type="InterPro" id="IPR013719">
    <property type="entry name" value="RTT106/SPT16-like_middle_dom"/>
</dbReference>
<dbReference type="InterPro" id="IPR050454">
    <property type="entry name" value="RTT106/SSRP1_HistChap/FACT"/>
</dbReference>
<dbReference type="InterPro" id="IPR048993">
    <property type="entry name" value="SSRP1-like_PH1"/>
</dbReference>
<dbReference type="InterPro" id="IPR000969">
    <property type="entry name" value="SSRP1/POB3"/>
</dbReference>
<dbReference type="InterPro" id="IPR035417">
    <property type="entry name" value="SSRP1/POB3_N"/>
</dbReference>
<dbReference type="InterPro" id="IPR048985">
    <property type="entry name" value="SSRP1_C"/>
</dbReference>
<dbReference type="InterPro" id="IPR024954">
    <property type="entry name" value="SSRP1_DD"/>
</dbReference>
<dbReference type="InterPro" id="IPR038167">
    <property type="entry name" value="SSRP1_sf"/>
</dbReference>
<dbReference type="PANTHER" id="PTHR45849">
    <property type="entry name" value="FACT COMPLEX SUBUNIT SSRP1"/>
    <property type="match status" value="1"/>
</dbReference>
<dbReference type="PANTHER" id="PTHR45849:SF1">
    <property type="entry name" value="FACT COMPLEX SUBUNIT SSRP1"/>
    <property type="match status" value="1"/>
</dbReference>
<dbReference type="Pfam" id="PF00505">
    <property type="entry name" value="HMG_box"/>
    <property type="match status" value="1"/>
</dbReference>
<dbReference type="Pfam" id="PF21103">
    <property type="entry name" value="PH1_SSRP1-like"/>
    <property type="match status" value="1"/>
</dbReference>
<dbReference type="Pfam" id="PF17292">
    <property type="entry name" value="POB3_N"/>
    <property type="match status" value="1"/>
</dbReference>
<dbReference type="Pfam" id="PF08512">
    <property type="entry name" value="Rttp106-like_middle"/>
    <property type="match status" value="1"/>
</dbReference>
<dbReference type="Pfam" id="PF03531">
    <property type="entry name" value="SSrecog"/>
    <property type="match status" value="1"/>
</dbReference>
<dbReference type="Pfam" id="PF21092">
    <property type="entry name" value="SSRP1_C"/>
    <property type="match status" value="1"/>
</dbReference>
<dbReference type="PRINTS" id="PR00887">
    <property type="entry name" value="SSRCOGNITION"/>
</dbReference>
<dbReference type="SMART" id="SM00398">
    <property type="entry name" value="HMG"/>
    <property type="match status" value="1"/>
</dbReference>
<dbReference type="SMART" id="SM01287">
    <property type="entry name" value="Rtt106"/>
    <property type="match status" value="1"/>
</dbReference>
<dbReference type="SUPFAM" id="SSF47095">
    <property type="entry name" value="HMG-box"/>
    <property type="match status" value="1"/>
</dbReference>
<dbReference type="SUPFAM" id="SSF50729">
    <property type="entry name" value="PH domain-like"/>
    <property type="match status" value="1"/>
</dbReference>
<dbReference type="PROSITE" id="PS50118">
    <property type="entry name" value="HMG_BOX_2"/>
    <property type="match status" value="1"/>
</dbReference>
<accession>Q08943</accession>
<accession>Q3U9Z2</accession>
<accession>Q3UJ75</accession>
<accession>Q4V9U4</accession>
<accession>Q8CGA6</accession>
<proteinExistence type="evidence at protein level"/>
<keyword id="KW-0007">Acetylation</keyword>
<keyword id="KW-0025">Alternative splicing</keyword>
<keyword id="KW-0158">Chromosome</keyword>
<keyword id="KW-0227">DNA damage</keyword>
<keyword id="KW-0234">DNA repair</keyword>
<keyword id="KW-0235">DNA replication</keyword>
<keyword id="KW-0238">DNA-binding</keyword>
<keyword id="KW-1017">Isopeptide bond</keyword>
<keyword id="KW-0539">Nucleus</keyword>
<keyword id="KW-0597">Phosphoprotein</keyword>
<keyword id="KW-1185">Reference proteome</keyword>
<keyword id="KW-0804">Transcription</keyword>
<keyword id="KW-0805">Transcription regulation</keyword>
<keyword id="KW-0832">Ubl conjugation</keyword>
<protein>
    <recommendedName>
        <fullName>FACT complex subunit SSRP1</fullName>
    </recommendedName>
    <alternativeName>
        <fullName>Facilitates chromatin transcription complex subunit SSRP1</fullName>
    </alternativeName>
    <alternativeName>
        <fullName>Recombination signal sequence recognition protein 1</fullName>
    </alternativeName>
    <alternativeName>
        <fullName>Structure-specific recognition protein 1</fullName>
    </alternativeName>
    <alternativeName>
        <fullName>T160</fullName>
    </alternativeName>
</protein>
<name>SSRP1_MOUSE</name>
<gene>
    <name type="primary">Ssrp1</name>
</gene>